<evidence type="ECO:0000250" key="1"/>
<evidence type="ECO:0000255" key="2"/>
<evidence type="ECO:0000256" key="3">
    <source>
        <dbReference type="SAM" id="MobiDB-lite"/>
    </source>
</evidence>
<evidence type="ECO:0000305" key="4"/>
<organism>
    <name type="scientific">Phaeosphaeria nodorum (strain SN15 / ATCC MYA-4574 / FGSC 10173)</name>
    <name type="common">Glume blotch fungus</name>
    <name type="synonym">Parastagonospora nodorum</name>
    <dbReference type="NCBI Taxonomy" id="321614"/>
    <lineage>
        <taxon>Eukaryota</taxon>
        <taxon>Fungi</taxon>
        <taxon>Dikarya</taxon>
        <taxon>Ascomycota</taxon>
        <taxon>Pezizomycotina</taxon>
        <taxon>Dothideomycetes</taxon>
        <taxon>Pleosporomycetidae</taxon>
        <taxon>Pleosporales</taxon>
        <taxon>Pleosporineae</taxon>
        <taxon>Phaeosphaeriaceae</taxon>
        <taxon>Parastagonospora</taxon>
    </lineage>
</organism>
<comment type="function">
    <text evidence="1">Type IV dipeptidyl-peptidase which removes N-terminal dipeptides sequentially from polypeptides having unsubstituted N-termini provided that the penultimate residue is proline.</text>
</comment>
<comment type="catalytic activity">
    <reaction>
        <text>Release of an N-terminal dipeptide, Xaa-Yaa-|-Zaa-, from a polypeptide, preferentially when Yaa is Pro, provided Zaa is neither Pro nor hydroxyproline.</text>
        <dbReference type="EC" id="3.4.14.5"/>
    </reaction>
</comment>
<comment type="subcellular location">
    <subcellularLocation>
        <location evidence="1">Vacuole membrane</location>
        <topology evidence="1">Single-pass type II membrane protein</topology>
    </subcellularLocation>
    <text evidence="1">Lysosome-like vacuoles.</text>
</comment>
<comment type="similarity">
    <text evidence="4">Belongs to the peptidase S9B family.</text>
</comment>
<keyword id="KW-0031">Aminopeptidase</keyword>
<keyword id="KW-0325">Glycoprotein</keyword>
<keyword id="KW-0378">Hydrolase</keyword>
<keyword id="KW-0472">Membrane</keyword>
<keyword id="KW-0645">Protease</keyword>
<keyword id="KW-0720">Serine protease</keyword>
<keyword id="KW-0735">Signal-anchor</keyword>
<keyword id="KW-0812">Transmembrane</keyword>
<keyword id="KW-1133">Transmembrane helix</keyword>
<keyword id="KW-0926">Vacuole</keyword>
<gene>
    <name type="primary">DAPB</name>
    <name type="ORF">SNOG_04207</name>
</gene>
<feature type="chain" id="PRO_0000412158" description="Probable dipeptidyl-aminopeptidase B">
    <location>
        <begin position="1"/>
        <end position="911"/>
    </location>
</feature>
<feature type="topological domain" description="Cytoplasmic" evidence="2">
    <location>
        <begin position="1"/>
        <end position="97"/>
    </location>
</feature>
<feature type="transmembrane region" description="Helical; Signal-anchor for type II membrane protein" evidence="2">
    <location>
        <begin position="98"/>
        <end position="118"/>
    </location>
</feature>
<feature type="topological domain" description="Vacuolar" evidence="2">
    <location>
        <begin position="119"/>
        <end position="911"/>
    </location>
</feature>
<feature type="region of interest" description="Disordered" evidence="3">
    <location>
        <begin position="1"/>
        <end position="39"/>
    </location>
</feature>
<feature type="compositionally biased region" description="Low complexity" evidence="3">
    <location>
        <begin position="25"/>
        <end position="39"/>
    </location>
</feature>
<feature type="active site" description="Charge relay system" evidence="1">
    <location>
        <position position="755"/>
    </location>
</feature>
<feature type="active site" description="Charge relay system" evidence="1">
    <location>
        <position position="832"/>
    </location>
</feature>
<feature type="active site" description="Charge relay system" evidence="1">
    <location>
        <position position="865"/>
    </location>
</feature>
<feature type="glycosylation site" description="N-linked (GlcNAc...) asparagine" evidence="2">
    <location>
        <position position="268"/>
    </location>
</feature>
<feature type="glycosylation site" description="N-linked (GlcNAc...) asparagine" evidence="2">
    <location>
        <position position="564"/>
    </location>
</feature>
<feature type="glycosylation site" description="N-linked (GlcNAc...) asparagine" evidence="2">
    <location>
        <position position="809"/>
    </location>
</feature>
<name>DAPB_PHANO</name>
<protein>
    <recommendedName>
        <fullName>Probable dipeptidyl-aminopeptidase B</fullName>
        <shortName>DPAP B</shortName>
        <ecNumber>3.4.14.5</ecNumber>
    </recommendedName>
</protein>
<dbReference type="EC" id="3.4.14.5"/>
<dbReference type="EMBL" id="CH445330">
    <property type="protein sequence ID" value="EAT87967.1"/>
    <property type="molecule type" value="Genomic_DNA"/>
</dbReference>
<dbReference type="RefSeq" id="XP_001794630.1">
    <property type="nucleotide sequence ID" value="XM_001794578.1"/>
</dbReference>
<dbReference type="SMR" id="Q0UVK7"/>
<dbReference type="FunCoup" id="Q0UVK7">
    <property type="interactions" value="306"/>
</dbReference>
<dbReference type="STRING" id="321614.Q0UVK7"/>
<dbReference type="ESTHER" id="phano-dapb">
    <property type="family name" value="DPP4N_Peptidase_S9"/>
</dbReference>
<dbReference type="MEROPS" id="S09.006"/>
<dbReference type="GlyCosmos" id="Q0UVK7">
    <property type="glycosylation" value="3 sites, No reported glycans"/>
</dbReference>
<dbReference type="EnsemblFungi" id="SNOT_04207">
    <property type="protein sequence ID" value="SNOT_04207"/>
    <property type="gene ID" value="SNOG_04207"/>
</dbReference>
<dbReference type="GeneID" id="5971498"/>
<dbReference type="KEGG" id="pno:SNOG_04207"/>
<dbReference type="VEuPathDB" id="FungiDB:JI435_042070"/>
<dbReference type="eggNOG" id="KOG2100">
    <property type="taxonomic scope" value="Eukaryota"/>
</dbReference>
<dbReference type="HOGENOM" id="CLU_006105_0_1_1"/>
<dbReference type="InParanoid" id="Q0UVK7"/>
<dbReference type="OMA" id="MRTPQEN"/>
<dbReference type="OrthoDB" id="16520at2759"/>
<dbReference type="Proteomes" id="UP000001055">
    <property type="component" value="Unassembled WGS sequence"/>
</dbReference>
<dbReference type="GO" id="GO:0000329">
    <property type="term" value="C:fungal-type vacuole membrane"/>
    <property type="evidence" value="ECO:0007669"/>
    <property type="project" value="EnsemblFungi"/>
</dbReference>
<dbReference type="GO" id="GO:0005886">
    <property type="term" value="C:plasma membrane"/>
    <property type="evidence" value="ECO:0000318"/>
    <property type="project" value="GO_Central"/>
</dbReference>
<dbReference type="GO" id="GO:0004177">
    <property type="term" value="F:aminopeptidase activity"/>
    <property type="evidence" value="ECO:0007669"/>
    <property type="project" value="UniProtKB-KW"/>
</dbReference>
<dbReference type="GO" id="GO:0008239">
    <property type="term" value="F:dipeptidyl-peptidase activity"/>
    <property type="evidence" value="ECO:0000318"/>
    <property type="project" value="GO_Central"/>
</dbReference>
<dbReference type="GO" id="GO:0008236">
    <property type="term" value="F:serine-type peptidase activity"/>
    <property type="evidence" value="ECO:0007669"/>
    <property type="project" value="UniProtKB-KW"/>
</dbReference>
<dbReference type="GO" id="GO:0006508">
    <property type="term" value="P:proteolysis"/>
    <property type="evidence" value="ECO:0000318"/>
    <property type="project" value="GO_Central"/>
</dbReference>
<dbReference type="FunFam" id="3.40.50.1820:FF:000003">
    <property type="entry name" value="Dipeptidyl peptidase 4"/>
    <property type="match status" value="1"/>
</dbReference>
<dbReference type="Gene3D" id="3.40.50.1820">
    <property type="entry name" value="alpha/beta hydrolase"/>
    <property type="match status" value="1"/>
</dbReference>
<dbReference type="Gene3D" id="2.140.10.30">
    <property type="entry name" value="Dipeptidylpeptidase IV, N-terminal domain"/>
    <property type="match status" value="1"/>
</dbReference>
<dbReference type="InterPro" id="IPR029058">
    <property type="entry name" value="AB_hydrolase_fold"/>
</dbReference>
<dbReference type="InterPro" id="IPR001375">
    <property type="entry name" value="Peptidase_S9_cat"/>
</dbReference>
<dbReference type="InterPro" id="IPR002469">
    <property type="entry name" value="Peptidase_S9B_N"/>
</dbReference>
<dbReference type="InterPro" id="IPR050278">
    <property type="entry name" value="Serine_Prot_S9B/DPPIV"/>
</dbReference>
<dbReference type="PANTHER" id="PTHR11731:SF200">
    <property type="entry name" value="DIPEPTIDYL PEPTIDASE 10, ISOFORM B"/>
    <property type="match status" value="1"/>
</dbReference>
<dbReference type="PANTHER" id="PTHR11731">
    <property type="entry name" value="PROTEASE FAMILY S9B,C DIPEPTIDYL-PEPTIDASE IV-RELATED"/>
    <property type="match status" value="1"/>
</dbReference>
<dbReference type="Pfam" id="PF00930">
    <property type="entry name" value="DPPIV_N"/>
    <property type="match status" value="1"/>
</dbReference>
<dbReference type="Pfam" id="PF00326">
    <property type="entry name" value="Peptidase_S9"/>
    <property type="match status" value="1"/>
</dbReference>
<dbReference type="SUPFAM" id="SSF53474">
    <property type="entry name" value="alpha/beta-Hydrolases"/>
    <property type="match status" value="1"/>
</dbReference>
<dbReference type="SUPFAM" id="SSF82171">
    <property type="entry name" value="DPP6 N-terminal domain-like"/>
    <property type="match status" value="1"/>
</dbReference>
<proteinExistence type="inferred from homology"/>
<sequence length="911" mass="103088">MPRPRAAKEEETELLAQHQESPRPSSDGSEASASSISTTSLVLEHINDGGFNGARSKVSEKYTDDGNGDLGHARERFDIEDGKFHPLTPVDKKARRTLWIVGTICAVGWALALVSFLMNGNYKHSSTRPHDPDASVTKGSGKKITLDNVLGGQFYPQSQSVSWIAGPKGEDGLLLEKGVSGKDYLVVEDIRSKGNTEAAGDKFTLMKKGNFQIGEDIFIYPSNVWPSADFKKVLVMSEQQKNWRHSYTGLYWIFDVETQTGEPLDPENQSARVQYASFSPQSDAVVFTRDNNLYLRKLDSQKVVKITHDGGSELFYGVPDWVYEEEVFQDNSATWWSEDGKYVAFLRTDESMVPTYPVQYFVSRPSGKQPDAGKESYPEVREIKYPKAGAPNPIVTLQFYDIEKSEMFRVDIDNDFTDKDRLITEIVWAGKSGQVLVRETNRESDILKLILIDVSKRTGKTIREENVAKLDGGWFEVSHKTTFIPADSSLGRANDGYIDSVIHEGYDHIGYFTPLDSDKPILLTKGEWEVVEAPSRVDLKNNLVYYVSTERGSMERHPYVVALNGTDKREVMDHSGPAYYDSSFSTGGGYALMSYQGPGIPWQKIVSTPSNTEKFEKVLEENKALEKMVQKHELPILKYQTIDVDGFKLNVLERRPPHFSEKRKYPVLFYQYSGPGSQQVQRKFEVDFQSYIAANLGYIVVTVDGRGTGFLGRKLRCITRDNIGYYEAYDQIAAAKMWAAKKYVDAEKLAIWGWSYGGFTTLKTIEMDGGRTFKYGMAVAPVTDWRFYDSIYTERYMHTPQNNPTGYDNTSITDVHSLSQNVRFLIMHGVADDNVHMQNTLTLLDKLDVAGVENYDVHVFPDSDHSIYFHNAHKIVYDKLTWWLTNAFNGEWLKIQKVRPKAQADARSLGR</sequence>
<accession>Q0UVK7</accession>
<reference key="1">
    <citation type="journal article" date="2007" name="Plant Cell">
        <title>Dothideomycete-plant interactions illuminated by genome sequencing and EST analysis of the wheat pathogen Stagonospora nodorum.</title>
        <authorList>
            <person name="Hane J.K."/>
            <person name="Lowe R.G.T."/>
            <person name="Solomon P.S."/>
            <person name="Tan K.-C."/>
            <person name="Schoch C.L."/>
            <person name="Spatafora J.W."/>
            <person name="Crous P.W."/>
            <person name="Kodira C.D."/>
            <person name="Birren B.W."/>
            <person name="Galagan J.E."/>
            <person name="Torriani S.F.F."/>
            <person name="McDonald B.A."/>
            <person name="Oliver R.P."/>
        </authorList>
    </citation>
    <scope>NUCLEOTIDE SEQUENCE [LARGE SCALE GENOMIC DNA]</scope>
    <source>
        <strain>SN15 / ATCC MYA-4574 / FGSC 10173</strain>
    </source>
</reference>